<sequence length="173" mass="20038">MSLLKILYYPDIRLRILAKPVKEINKKIQKIANDMIDTMYQEEGIGLAATQVNIPLQIIVVNTMEQKKNNLVLINPKIIKKEGDISIEEGCLSIPEYQASIPRSNYIQVQAVNLDGEKIEIEAKSILSICIQHEIDHLKGKLFIDYLSKFKRERIQKKFEKINKKNKKFSIKE</sequence>
<proteinExistence type="inferred from homology"/>
<evidence type="ECO:0000255" key="1">
    <source>
        <dbReference type="HAMAP-Rule" id="MF_00163"/>
    </source>
</evidence>
<accession>P57563</accession>
<keyword id="KW-0378">Hydrolase</keyword>
<keyword id="KW-0408">Iron</keyword>
<keyword id="KW-0479">Metal-binding</keyword>
<keyword id="KW-0648">Protein biosynthesis</keyword>
<keyword id="KW-1185">Reference proteome</keyword>
<organism>
    <name type="scientific">Buchnera aphidicola subsp. Acyrthosiphon pisum (strain APS)</name>
    <name type="common">Acyrthosiphon pisum symbiotic bacterium</name>
    <dbReference type="NCBI Taxonomy" id="107806"/>
    <lineage>
        <taxon>Bacteria</taxon>
        <taxon>Pseudomonadati</taxon>
        <taxon>Pseudomonadota</taxon>
        <taxon>Gammaproteobacteria</taxon>
        <taxon>Enterobacterales</taxon>
        <taxon>Erwiniaceae</taxon>
        <taxon>Buchnera</taxon>
    </lineage>
</organism>
<feature type="chain" id="PRO_0000082754" description="Peptide deformylase">
    <location>
        <begin position="1"/>
        <end position="173"/>
    </location>
</feature>
<feature type="active site" evidence="1">
    <location>
        <position position="134"/>
    </location>
</feature>
<feature type="binding site" evidence="1">
    <location>
        <position position="91"/>
    </location>
    <ligand>
        <name>Fe cation</name>
        <dbReference type="ChEBI" id="CHEBI:24875"/>
    </ligand>
</feature>
<feature type="binding site" evidence="1">
    <location>
        <position position="133"/>
    </location>
    <ligand>
        <name>Fe cation</name>
        <dbReference type="ChEBI" id="CHEBI:24875"/>
    </ligand>
</feature>
<feature type="binding site" evidence="1">
    <location>
        <position position="137"/>
    </location>
    <ligand>
        <name>Fe cation</name>
        <dbReference type="ChEBI" id="CHEBI:24875"/>
    </ligand>
</feature>
<name>DEF_BUCAI</name>
<comment type="function">
    <text evidence="1">Removes the formyl group from the N-terminal Met of newly synthesized proteins. Requires at least a dipeptide for an efficient rate of reaction. N-terminal L-methionine is a prerequisite for activity but the enzyme has broad specificity at other positions.</text>
</comment>
<comment type="catalytic activity">
    <reaction evidence="1">
        <text>N-terminal N-formyl-L-methionyl-[peptide] + H2O = N-terminal L-methionyl-[peptide] + formate</text>
        <dbReference type="Rhea" id="RHEA:24420"/>
        <dbReference type="Rhea" id="RHEA-COMP:10639"/>
        <dbReference type="Rhea" id="RHEA-COMP:10640"/>
        <dbReference type="ChEBI" id="CHEBI:15377"/>
        <dbReference type="ChEBI" id="CHEBI:15740"/>
        <dbReference type="ChEBI" id="CHEBI:49298"/>
        <dbReference type="ChEBI" id="CHEBI:64731"/>
        <dbReference type="EC" id="3.5.1.88"/>
    </reaction>
</comment>
<comment type="cofactor">
    <cofactor evidence="1">
        <name>Fe(2+)</name>
        <dbReference type="ChEBI" id="CHEBI:29033"/>
    </cofactor>
    <text evidence="1">Binds 1 Fe(2+) ion.</text>
</comment>
<comment type="similarity">
    <text evidence="1">Belongs to the polypeptide deformylase family.</text>
</comment>
<protein>
    <recommendedName>
        <fullName evidence="1">Peptide deformylase</fullName>
        <shortName evidence="1">PDF</shortName>
        <ecNumber evidence="1">3.5.1.88</ecNumber>
    </recommendedName>
    <alternativeName>
        <fullName evidence="1">Polypeptide deformylase</fullName>
    </alternativeName>
</protein>
<dbReference type="EC" id="3.5.1.88" evidence="1"/>
<dbReference type="EMBL" id="BA000003">
    <property type="protein sequence ID" value="BAB13189.1"/>
    <property type="molecule type" value="Genomic_DNA"/>
</dbReference>
<dbReference type="RefSeq" id="NP_240303.1">
    <property type="nucleotide sequence ID" value="NC_002528.1"/>
</dbReference>
<dbReference type="RefSeq" id="WP_009874447.1">
    <property type="nucleotide sequence ID" value="NC_002528.1"/>
</dbReference>
<dbReference type="SMR" id="P57563"/>
<dbReference type="STRING" id="563178.BUAP5A_489"/>
<dbReference type="EnsemblBacteria" id="BAB13189">
    <property type="protein sequence ID" value="BAB13189"/>
    <property type="gene ID" value="BAB13189"/>
</dbReference>
<dbReference type="KEGG" id="buc:BU496"/>
<dbReference type="PATRIC" id="fig|107806.10.peg.501"/>
<dbReference type="eggNOG" id="COG0242">
    <property type="taxonomic scope" value="Bacteria"/>
</dbReference>
<dbReference type="HOGENOM" id="CLU_061901_2_1_6"/>
<dbReference type="Proteomes" id="UP000001806">
    <property type="component" value="Chromosome"/>
</dbReference>
<dbReference type="GO" id="GO:0046872">
    <property type="term" value="F:metal ion binding"/>
    <property type="evidence" value="ECO:0007669"/>
    <property type="project" value="UniProtKB-KW"/>
</dbReference>
<dbReference type="GO" id="GO:0042586">
    <property type="term" value="F:peptide deformylase activity"/>
    <property type="evidence" value="ECO:0007669"/>
    <property type="project" value="UniProtKB-UniRule"/>
</dbReference>
<dbReference type="GO" id="GO:0043686">
    <property type="term" value="P:co-translational protein modification"/>
    <property type="evidence" value="ECO:0007669"/>
    <property type="project" value="TreeGrafter"/>
</dbReference>
<dbReference type="GO" id="GO:0006412">
    <property type="term" value="P:translation"/>
    <property type="evidence" value="ECO:0007669"/>
    <property type="project" value="UniProtKB-UniRule"/>
</dbReference>
<dbReference type="CDD" id="cd00487">
    <property type="entry name" value="Pep_deformylase"/>
    <property type="match status" value="1"/>
</dbReference>
<dbReference type="FunFam" id="3.90.45.10:FF:000001">
    <property type="entry name" value="Peptide deformylase"/>
    <property type="match status" value="1"/>
</dbReference>
<dbReference type="Gene3D" id="3.90.45.10">
    <property type="entry name" value="Peptide deformylase"/>
    <property type="match status" value="1"/>
</dbReference>
<dbReference type="HAMAP" id="MF_00163">
    <property type="entry name" value="Pep_deformylase"/>
    <property type="match status" value="1"/>
</dbReference>
<dbReference type="InterPro" id="IPR023635">
    <property type="entry name" value="Peptide_deformylase"/>
</dbReference>
<dbReference type="InterPro" id="IPR036821">
    <property type="entry name" value="Peptide_deformylase_sf"/>
</dbReference>
<dbReference type="NCBIfam" id="TIGR00079">
    <property type="entry name" value="pept_deformyl"/>
    <property type="match status" value="1"/>
</dbReference>
<dbReference type="NCBIfam" id="NF001159">
    <property type="entry name" value="PRK00150.1-3"/>
    <property type="match status" value="1"/>
</dbReference>
<dbReference type="PANTHER" id="PTHR10458">
    <property type="entry name" value="PEPTIDE DEFORMYLASE"/>
    <property type="match status" value="1"/>
</dbReference>
<dbReference type="PANTHER" id="PTHR10458:SF22">
    <property type="entry name" value="PEPTIDE DEFORMYLASE"/>
    <property type="match status" value="1"/>
</dbReference>
<dbReference type="Pfam" id="PF01327">
    <property type="entry name" value="Pep_deformylase"/>
    <property type="match status" value="1"/>
</dbReference>
<dbReference type="PIRSF" id="PIRSF004749">
    <property type="entry name" value="Pep_def"/>
    <property type="match status" value="1"/>
</dbReference>
<dbReference type="PRINTS" id="PR01576">
    <property type="entry name" value="PDEFORMYLASE"/>
</dbReference>
<dbReference type="SUPFAM" id="SSF56420">
    <property type="entry name" value="Peptide deformylase"/>
    <property type="match status" value="1"/>
</dbReference>
<reference key="1">
    <citation type="journal article" date="2000" name="Nature">
        <title>Genome sequence of the endocellular bacterial symbiont of aphids Buchnera sp. APS.</title>
        <authorList>
            <person name="Shigenobu S."/>
            <person name="Watanabe H."/>
            <person name="Hattori M."/>
            <person name="Sakaki Y."/>
            <person name="Ishikawa H."/>
        </authorList>
    </citation>
    <scope>NUCLEOTIDE SEQUENCE [LARGE SCALE GENOMIC DNA]</scope>
    <source>
        <strain>APS</strain>
    </source>
</reference>
<gene>
    <name evidence="1" type="primary">def</name>
    <name type="ordered locus">BU496</name>
</gene>